<proteinExistence type="evidence at protein level"/>
<accession>P80228</accession>
<keyword id="KW-0998">Cell outer membrane</keyword>
<keyword id="KW-0903">Direct protein sequencing</keyword>
<keyword id="KW-0406">Ion transport</keyword>
<keyword id="KW-0472">Membrane</keyword>
<keyword id="KW-0626">Porin</keyword>
<keyword id="KW-0812">Transmembrane</keyword>
<keyword id="KW-1134">Transmembrane beta strand</keyword>
<keyword id="KW-0813">Transport</keyword>
<evidence type="ECO:0000305" key="1"/>
<feature type="chain" id="PRO_0000198030" description="Major outer membrane protein P44">
    <location>
        <begin position="1"/>
        <end position="21" status="greater than"/>
    </location>
</feature>
<feature type="non-terminal residue">
    <location>
        <position position="21"/>
    </location>
</feature>
<name>OMP44_MANHA</name>
<reference key="1">
    <citation type="journal article" date="1994" name="Zentralbl. Bakteriol.">
        <title>Isolation and partial characterization of the major protein of the outer membrane of Pasteurella haemolytica and Pasteurella multocida.</title>
        <authorList>
            <person name="Luebke A."/>
            <person name="Hartmann L."/>
            <person name="Schroeder W."/>
            <person name="Hellmann E."/>
        </authorList>
    </citation>
    <scope>PROTEIN SEQUENCE</scope>
    <source>
        <strain>Biovar A / Serovar 1 129</strain>
    </source>
</reference>
<sequence>TTVYDAEGSKVDFDGSLRIIV</sequence>
<protein>
    <recommendedName>
        <fullName>Major outer membrane protein P44</fullName>
        <shortName>OMP</shortName>
    </recommendedName>
</protein>
<organism>
    <name type="scientific">Mannheimia haemolytica</name>
    <name type="common">Pasteurella haemolytica</name>
    <dbReference type="NCBI Taxonomy" id="75985"/>
    <lineage>
        <taxon>Bacteria</taxon>
        <taxon>Pseudomonadati</taxon>
        <taxon>Pseudomonadota</taxon>
        <taxon>Gammaproteobacteria</taxon>
        <taxon>Pasteurellales</taxon>
        <taxon>Pasteurellaceae</taxon>
        <taxon>Mannheimia</taxon>
    </lineage>
</organism>
<comment type="subunit">
    <text evidence="1">Monomer.</text>
</comment>
<comment type="subcellular location">
    <subcellularLocation>
        <location>Cell outer membrane</location>
    </subcellularLocation>
</comment>
<dbReference type="GO" id="GO:0009279">
    <property type="term" value="C:cell outer membrane"/>
    <property type="evidence" value="ECO:0007669"/>
    <property type="project" value="UniProtKB-SubCell"/>
</dbReference>
<dbReference type="GO" id="GO:0046930">
    <property type="term" value="C:pore complex"/>
    <property type="evidence" value="ECO:0007669"/>
    <property type="project" value="UniProtKB-KW"/>
</dbReference>
<dbReference type="GO" id="GO:0015288">
    <property type="term" value="F:porin activity"/>
    <property type="evidence" value="ECO:0007669"/>
    <property type="project" value="UniProtKB-KW"/>
</dbReference>
<dbReference type="GO" id="GO:0006811">
    <property type="term" value="P:monoatomic ion transport"/>
    <property type="evidence" value="ECO:0007669"/>
    <property type="project" value="UniProtKB-KW"/>
</dbReference>